<dbReference type="EMBL" id="X04400">
    <property type="protein sequence ID" value="CAA27988.1"/>
    <property type="molecule type" value="Genomic_DNA"/>
</dbReference>
<dbReference type="PIR" id="A27891">
    <property type="entry name" value="A27891"/>
</dbReference>
<dbReference type="GO" id="GO:0006260">
    <property type="term" value="P:DNA replication"/>
    <property type="evidence" value="ECO:0007669"/>
    <property type="project" value="UniProtKB-KW"/>
</dbReference>
<keyword id="KW-0235">DNA replication</keyword>
<keyword id="KW-0614">Plasmid</keyword>
<sequence length="396" mass="47578">MNNEPVKRGKKNRWELNLPIMTYVVADDWIDKLGRETFTLWLRFHTWVDREDELRDYDRIPRSFENIYKKTLGISKSKFYRLIKPLWEYGLIDIIEYEESNRNSTKPKNIIVYEYPLHEIERKYKPLEKLRDWDKDYNSVSKELGKTGGRPRKKDSEEEPEKKPEEVTKKKRKYKLKRVIHNGFKNETVEGFKNETVEGFKNETVTVSKIKPNNYSNIFNNLSNISTNVSNNLLIDDDEEIENEPTGRTINRSLLFSQEDIKQAYQFINRFSVIQLRENFSFDKHFEERLVCYLWKAGISTFYTHEISKMIKKIADYEKSKKGRLNPIRDRALYMVNGLVMNRASSQSEHATYKLNQYKKQKEQEKQQQEQQRSRVPFYNWLEEREEQTEGQLPTT</sequence>
<gene>
    <name type="primary">repA</name>
</gene>
<protein>
    <recommendedName>
        <fullName>Protein RepA</fullName>
    </recommendedName>
</protein>
<proteinExistence type="predicted"/>
<organism>
    <name type="scientific">Bacillus subtilis</name>
    <dbReference type="NCBI Taxonomy" id="1423"/>
    <lineage>
        <taxon>Bacteria</taxon>
        <taxon>Bacillati</taxon>
        <taxon>Bacillota</taxon>
        <taxon>Bacilli</taxon>
        <taxon>Bacillales</taxon>
        <taxon>Bacillaceae</taxon>
        <taxon>Bacillus</taxon>
    </lineage>
</organism>
<evidence type="ECO:0000256" key="1">
    <source>
        <dbReference type="SAM" id="MobiDB-lite"/>
    </source>
</evidence>
<geneLocation type="plasmid">
    <name>pRAT11</name>
</geneLocation>
<reference key="1">
    <citation type="journal article" date="1986" name="Mol. Gen. Genet.">
        <title>Complete nucleotide sequence of the low copy number plasmid pRAT11 and replication control by the RepA protein in Bacillus subtilis.</title>
        <authorList>
            <person name="Imanaka T."/>
            <person name="Ishikawa H."/>
            <person name="Aiba S."/>
        </authorList>
    </citation>
    <scope>NUCLEOTIDE SEQUENCE [GENOMIC DNA]</scope>
</reference>
<feature type="chain" id="PRO_0000068309" description="Protein RepA">
    <location>
        <begin position="1"/>
        <end position="396"/>
    </location>
</feature>
<feature type="region of interest" description="Disordered" evidence="1">
    <location>
        <begin position="141"/>
        <end position="170"/>
    </location>
</feature>
<feature type="region of interest" description="Disordered" evidence="1">
    <location>
        <begin position="356"/>
        <end position="396"/>
    </location>
</feature>
<feature type="compositionally biased region" description="Basic and acidic residues" evidence="1">
    <location>
        <begin position="154"/>
        <end position="168"/>
    </location>
</feature>
<accession>P13962</accession>
<name>REPA_BACIU</name>